<keyword id="KW-0150">Chloroplast</keyword>
<keyword id="KW-0251">Elongation factor</keyword>
<keyword id="KW-0342">GTP-binding</keyword>
<keyword id="KW-0378">Hydrolase</keyword>
<keyword id="KW-0547">Nucleotide-binding</keyword>
<keyword id="KW-0934">Plastid</keyword>
<keyword id="KW-0648">Protein biosynthesis</keyword>
<proteinExistence type="inferred from homology"/>
<feature type="chain" id="PRO_0000091446" description="Elongation factor Tu, chloroplastic">
    <location>
        <begin position="1" status="less than"/>
        <end position="235" status="greater than"/>
    </location>
</feature>
<feature type="domain" description="tr-type G" evidence="3">
    <location>
        <begin position="1" status="less than"/>
        <end position="125"/>
    </location>
</feature>
<feature type="binding site" evidence="1">
    <location>
        <begin position="47"/>
        <end position="50"/>
    </location>
    <ligand>
        <name>GTP</name>
        <dbReference type="ChEBI" id="CHEBI:37565"/>
    </ligand>
</feature>
<feature type="non-terminal residue">
    <location>
        <position position="1"/>
    </location>
</feature>
<feature type="non-terminal residue">
    <location>
        <position position="235"/>
    </location>
</feature>
<geneLocation type="chloroplast"/>
<dbReference type="EC" id="3.6.5.3" evidence="2"/>
<dbReference type="EMBL" id="U09424">
    <property type="protein sequence ID" value="AAA87684.1"/>
    <property type="molecule type" value="Genomic_DNA"/>
</dbReference>
<dbReference type="SMR" id="P50374"/>
<dbReference type="GO" id="GO:0009507">
    <property type="term" value="C:chloroplast"/>
    <property type="evidence" value="ECO:0007669"/>
    <property type="project" value="UniProtKB-SubCell"/>
</dbReference>
<dbReference type="GO" id="GO:0005739">
    <property type="term" value="C:mitochondrion"/>
    <property type="evidence" value="ECO:0007669"/>
    <property type="project" value="TreeGrafter"/>
</dbReference>
<dbReference type="GO" id="GO:0005525">
    <property type="term" value="F:GTP binding"/>
    <property type="evidence" value="ECO:0007669"/>
    <property type="project" value="UniProtKB-KW"/>
</dbReference>
<dbReference type="GO" id="GO:0003924">
    <property type="term" value="F:GTPase activity"/>
    <property type="evidence" value="ECO:0007669"/>
    <property type="project" value="InterPro"/>
</dbReference>
<dbReference type="GO" id="GO:0003746">
    <property type="term" value="F:translation elongation factor activity"/>
    <property type="evidence" value="ECO:0007669"/>
    <property type="project" value="UniProtKB-KW"/>
</dbReference>
<dbReference type="GO" id="GO:0070125">
    <property type="term" value="P:mitochondrial translational elongation"/>
    <property type="evidence" value="ECO:0007669"/>
    <property type="project" value="TreeGrafter"/>
</dbReference>
<dbReference type="CDD" id="cd03697">
    <property type="entry name" value="EFTU_II"/>
    <property type="match status" value="1"/>
</dbReference>
<dbReference type="FunFam" id="2.40.30.10:FF:000001">
    <property type="entry name" value="Elongation factor Tu"/>
    <property type="match status" value="1"/>
</dbReference>
<dbReference type="Gene3D" id="3.40.50.300">
    <property type="entry name" value="P-loop containing nucleotide triphosphate hydrolases"/>
    <property type="match status" value="1"/>
</dbReference>
<dbReference type="Gene3D" id="2.40.30.10">
    <property type="entry name" value="Translation factors"/>
    <property type="match status" value="1"/>
</dbReference>
<dbReference type="InterPro" id="IPR050055">
    <property type="entry name" value="EF-Tu_GTPase"/>
</dbReference>
<dbReference type="InterPro" id="IPR004161">
    <property type="entry name" value="EFTu-like_2"/>
</dbReference>
<dbReference type="InterPro" id="IPR033720">
    <property type="entry name" value="EFTU_2"/>
</dbReference>
<dbReference type="InterPro" id="IPR027417">
    <property type="entry name" value="P-loop_NTPase"/>
</dbReference>
<dbReference type="InterPro" id="IPR000795">
    <property type="entry name" value="T_Tr_GTP-bd_dom"/>
</dbReference>
<dbReference type="InterPro" id="IPR009000">
    <property type="entry name" value="Transl_B-barrel_sf"/>
</dbReference>
<dbReference type="PANTHER" id="PTHR43721:SF5">
    <property type="entry name" value="ELONGATION FACTOR TU, CHLOROPLASTIC"/>
    <property type="match status" value="1"/>
</dbReference>
<dbReference type="PANTHER" id="PTHR43721">
    <property type="entry name" value="ELONGATION FACTOR TU-RELATED"/>
    <property type="match status" value="1"/>
</dbReference>
<dbReference type="Pfam" id="PF00009">
    <property type="entry name" value="GTP_EFTU"/>
    <property type="match status" value="1"/>
</dbReference>
<dbReference type="Pfam" id="PF03144">
    <property type="entry name" value="GTP_EFTU_D2"/>
    <property type="match status" value="1"/>
</dbReference>
<dbReference type="PRINTS" id="PR00315">
    <property type="entry name" value="ELONGATNFCT"/>
</dbReference>
<dbReference type="SUPFAM" id="SSF52540">
    <property type="entry name" value="P-loop containing nucleoside triphosphate hydrolases"/>
    <property type="match status" value="1"/>
</dbReference>
<dbReference type="SUPFAM" id="SSF50447">
    <property type="entry name" value="Translation proteins"/>
    <property type="match status" value="1"/>
</dbReference>
<dbReference type="PROSITE" id="PS51722">
    <property type="entry name" value="G_TR_2"/>
    <property type="match status" value="1"/>
</dbReference>
<reference key="1">
    <citation type="journal article" date="1995" name="Mol. Phylogenet. Evol.">
        <title>Phylogenetic analysis of tufA sequences indicates a cyanobacterial origin of all plastids.</title>
        <authorList>
            <person name="Delwiche C.F."/>
            <person name="Kuhsel M."/>
            <person name="Palmer J.D."/>
        </authorList>
    </citation>
    <scope>NUCLEOTIDE SEQUENCE [GENOMIC DNA]</scope>
</reference>
<protein>
    <recommendedName>
        <fullName>Elongation factor Tu, chloroplastic</fullName>
        <shortName>EF-Tu</shortName>
        <ecNumber evidence="2">3.6.5.3</ecNumber>
    </recommendedName>
</protein>
<evidence type="ECO:0000250" key="1"/>
<evidence type="ECO:0000255" key="2">
    <source>
        <dbReference type="HAMAP-Rule" id="MF_00118"/>
    </source>
</evidence>
<evidence type="ECO:0000255" key="3">
    <source>
        <dbReference type="PROSITE-ProRule" id="PRU01059"/>
    </source>
</evidence>
<comment type="function">
    <text evidence="2">GTP hydrolase that promotes the GTP-dependent binding of aminoacyl-tRNA to the A-site of ribosomes during protein biosynthesis.</text>
</comment>
<comment type="catalytic activity">
    <reaction evidence="2">
        <text>GTP + H2O = GDP + phosphate + H(+)</text>
        <dbReference type="Rhea" id="RHEA:19669"/>
        <dbReference type="ChEBI" id="CHEBI:15377"/>
        <dbReference type="ChEBI" id="CHEBI:15378"/>
        <dbReference type="ChEBI" id="CHEBI:37565"/>
        <dbReference type="ChEBI" id="CHEBI:43474"/>
        <dbReference type="ChEBI" id="CHEBI:58189"/>
        <dbReference type="EC" id="3.6.5.3"/>
    </reaction>
    <physiologicalReaction direction="left-to-right" evidence="2">
        <dbReference type="Rhea" id="RHEA:19670"/>
    </physiologicalReaction>
</comment>
<comment type="subcellular location">
    <subcellularLocation>
        <location>Plastid</location>
        <location>Chloroplast</location>
    </subcellularLocation>
</comment>
<comment type="similarity">
    <text evidence="3">Belongs to the TRAFAC class translation factor GTPase superfamily. Classic translation factor GTPase family. EF-Tu/EF-1A subfamily.</text>
</comment>
<accession>P50374</accession>
<sequence>KNMITGAAQMDGAILVVSGADGPMPQTKEHILLAKQVGVPSIVVFLNKADQVDDEELLELVELEVRETLNEYEFPGDDIPITSGSALLALEALTENPDTNRTGDPWVKKIYDLMNEVDNYIPLPTRDTDKPFLMAIENVVSITGRGTVTTGRVERGADQVGDNIEIVGLKETRQATITGLEMFQKTLEKSVAGDNVGVLLRGIQKEEVEPGMVLAKPGSITPHKQFEAQVYILKK</sequence>
<name>EFTU_BRYPL</name>
<organism>
    <name type="scientific">Bryopsis plumosa</name>
    <name type="common">Green alga</name>
    <name type="synonym">Ulva plumosa</name>
    <dbReference type="NCBI Taxonomy" id="3130"/>
    <lineage>
        <taxon>Eukaryota</taxon>
        <taxon>Viridiplantae</taxon>
        <taxon>Chlorophyta</taxon>
        <taxon>Ulvophyceae</taxon>
        <taxon>TCBD clade</taxon>
        <taxon>Bryopsidales</taxon>
        <taxon>Bryopsidineae</taxon>
        <taxon>Bryopsidaceae</taxon>
        <taxon>Bryopsis</taxon>
    </lineage>
</organism>
<gene>
    <name type="primary">tufA</name>
</gene>